<accession>B8F8M2</accession>
<feature type="chain" id="PRO_1000201189" description="3-hydroxydecanoyl-[acyl-carrier-protein] dehydratase">
    <location>
        <begin position="1"/>
        <end position="176"/>
    </location>
</feature>
<feature type="active site" evidence="1">
    <location>
        <position position="75"/>
    </location>
</feature>
<proteinExistence type="inferred from homology"/>
<keyword id="KW-0963">Cytoplasm</keyword>
<keyword id="KW-0275">Fatty acid biosynthesis</keyword>
<keyword id="KW-0276">Fatty acid metabolism</keyword>
<keyword id="KW-0413">Isomerase</keyword>
<keyword id="KW-0444">Lipid biosynthesis</keyword>
<keyword id="KW-0443">Lipid metabolism</keyword>
<keyword id="KW-0456">Lyase</keyword>
<keyword id="KW-1185">Reference proteome</keyword>
<dbReference type="EC" id="4.2.1.59" evidence="1"/>
<dbReference type="EC" id="5.3.3.14" evidence="1"/>
<dbReference type="EMBL" id="CP001321">
    <property type="protein sequence ID" value="ACL33674.1"/>
    <property type="molecule type" value="Genomic_DNA"/>
</dbReference>
<dbReference type="RefSeq" id="WP_010785985.1">
    <property type="nucleotide sequence ID" value="NC_011852.1"/>
</dbReference>
<dbReference type="SMR" id="B8F8M2"/>
<dbReference type="STRING" id="557723.HAPS_2242"/>
<dbReference type="KEGG" id="hap:HAPS_2242"/>
<dbReference type="HOGENOM" id="CLU_097925_0_0_6"/>
<dbReference type="UniPathway" id="UPA00094"/>
<dbReference type="Proteomes" id="UP000006743">
    <property type="component" value="Chromosome"/>
</dbReference>
<dbReference type="GO" id="GO:0005737">
    <property type="term" value="C:cytoplasm"/>
    <property type="evidence" value="ECO:0007669"/>
    <property type="project" value="UniProtKB-SubCell"/>
</dbReference>
<dbReference type="GO" id="GO:0019171">
    <property type="term" value="F:(3R)-hydroxyacyl-[acyl-carrier-protein] dehydratase activity"/>
    <property type="evidence" value="ECO:0007669"/>
    <property type="project" value="UniProtKB-UniRule"/>
</dbReference>
<dbReference type="GO" id="GO:0034017">
    <property type="term" value="F:trans-2-decenoyl-acyl-carrier-protein isomerase activity"/>
    <property type="evidence" value="ECO:0007669"/>
    <property type="project" value="UniProtKB-UniRule"/>
</dbReference>
<dbReference type="GO" id="GO:0006636">
    <property type="term" value="P:unsaturated fatty acid biosynthetic process"/>
    <property type="evidence" value="ECO:0007669"/>
    <property type="project" value="UniProtKB-UniRule"/>
</dbReference>
<dbReference type="CDD" id="cd01287">
    <property type="entry name" value="FabA"/>
    <property type="match status" value="1"/>
</dbReference>
<dbReference type="Gene3D" id="3.10.129.10">
    <property type="entry name" value="Hotdog Thioesterase"/>
    <property type="match status" value="1"/>
</dbReference>
<dbReference type="HAMAP" id="MF_00405">
    <property type="entry name" value="FabA"/>
    <property type="match status" value="1"/>
</dbReference>
<dbReference type="InterPro" id="IPR010083">
    <property type="entry name" value="FabA"/>
</dbReference>
<dbReference type="InterPro" id="IPR013114">
    <property type="entry name" value="FabA_FabZ"/>
</dbReference>
<dbReference type="InterPro" id="IPR029069">
    <property type="entry name" value="HotDog_dom_sf"/>
</dbReference>
<dbReference type="NCBIfam" id="TIGR01749">
    <property type="entry name" value="fabA"/>
    <property type="match status" value="1"/>
</dbReference>
<dbReference type="NCBIfam" id="NF003509">
    <property type="entry name" value="PRK05174.1"/>
    <property type="match status" value="1"/>
</dbReference>
<dbReference type="PANTHER" id="PTHR30272">
    <property type="entry name" value="3-HYDROXYACYL-[ACYL-CARRIER-PROTEIN] DEHYDRATASE"/>
    <property type="match status" value="1"/>
</dbReference>
<dbReference type="PANTHER" id="PTHR30272:SF8">
    <property type="entry name" value="3-HYDROXYDECANOYL-[ACYL-CARRIER-PROTEIN] DEHYDRATASE"/>
    <property type="match status" value="1"/>
</dbReference>
<dbReference type="Pfam" id="PF07977">
    <property type="entry name" value="FabA"/>
    <property type="match status" value="1"/>
</dbReference>
<dbReference type="SUPFAM" id="SSF54637">
    <property type="entry name" value="Thioesterase/thiol ester dehydrase-isomerase"/>
    <property type="match status" value="1"/>
</dbReference>
<organism>
    <name type="scientific">Glaesserella parasuis serovar 5 (strain SH0165)</name>
    <name type="common">Haemophilus parasuis</name>
    <dbReference type="NCBI Taxonomy" id="557723"/>
    <lineage>
        <taxon>Bacteria</taxon>
        <taxon>Pseudomonadati</taxon>
        <taxon>Pseudomonadota</taxon>
        <taxon>Gammaproteobacteria</taxon>
        <taxon>Pasteurellales</taxon>
        <taxon>Pasteurellaceae</taxon>
        <taxon>Glaesserella</taxon>
    </lineage>
</organism>
<gene>
    <name evidence="1" type="primary">fabA</name>
    <name type="ordered locus">HAPS_2242</name>
</gene>
<evidence type="ECO:0000255" key="1">
    <source>
        <dbReference type="HAMAP-Rule" id="MF_00405"/>
    </source>
</evidence>
<protein>
    <recommendedName>
        <fullName evidence="1">3-hydroxydecanoyl-[acyl-carrier-protein] dehydratase</fullName>
        <ecNumber evidence="1">4.2.1.59</ecNumber>
    </recommendedName>
    <alternativeName>
        <fullName evidence="1">3-hydroxyacyl-[acyl-carrier-protein] dehydratase FabA</fullName>
    </alternativeName>
    <alternativeName>
        <fullName evidence="1">Beta-hydroxydecanoyl thioester dehydrase</fullName>
    </alternativeName>
    <alternativeName>
        <fullName evidence="1">Trans-2-decenoyl-[acyl-carrier-protein] isomerase</fullName>
        <ecNumber evidence="1">5.3.3.14</ecNumber>
    </alternativeName>
</protein>
<name>FABA_GLAP5</name>
<sequence>MNTCTPNIKPSYDYNDLLASGRGELFGSEGPQLPAPSMLMMDRITKITDKEGLFEKGYIEAELDINQDLPFFGCHFIGDPVMPGCLGLDAMWQLVGFYLGWVGGKGKGRALGVGEVKFTGQILPTAKKVIYRINMKRVINRKLVMGLADGEVEVDGRIIYTATDLKVGLFQDTTSF</sequence>
<reference key="1">
    <citation type="journal article" date="2009" name="J. Bacteriol.">
        <title>Complete genome sequence of Haemophilus parasuis SH0165.</title>
        <authorList>
            <person name="Yue M."/>
            <person name="Yang F."/>
            <person name="Yang J."/>
            <person name="Bei W."/>
            <person name="Cai X."/>
            <person name="Chen L."/>
            <person name="Dong J."/>
            <person name="Zhou R."/>
            <person name="Jin M."/>
            <person name="Jin Q."/>
            <person name="Chen H."/>
        </authorList>
    </citation>
    <scope>NUCLEOTIDE SEQUENCE [LARGE SCALE GENOMIC DNA]</scope>
    <source>
        <strain>SH0165</strain>
    </source>
</reference>
<comment type="function">
    <text evidence="1">Necessary for the introduction of cis unsaturation into fatty acids. Catalyzes the dehydration of (3R)-3-hydroxydecanoyl-ACP to E-(2)-decenoyl-ACP and then its isomerization to Z-(3)-decenoyl-ACP. Can catalyze the dehydratase reaction for beta-hydroxyacyl-ACPs with saturated chain lengths up to 16:0, being most active on intermediate chain length.</text>
</comment>
<comment type="catalytic activity">
    <reaction evidence="1">
        <text>a (3R)-hydroxyacyl-[ACP] = a (2E)-enoyl-[ACP] + H2O</text>
        <dbReference type="Rhea" id="RHEA:13097"/>
        <dbReference type="Rhea" id="RHEA-COMP:9925"/>
        <dbReference type="Rhea" id="RHEA-COMP:9945"/>
        <dbReference type="ChEBI" id="CHEBI:15377"/>
        <dbReference type="ChEBI" id="CHEBI:78784"/>
        <dbReference type="ChEBI" id="CHEBI:78827"/>
        <dbReference type="EC" id="4.2.1.59"/>
    </reaction>
</comment>
<comment type="catalytic activity">
    <reaction evidence="1">
        <text>(3R)-hydroxydecanoyl-[ACP] = (2E)-decenoyl-[ACP] + H2O</text>
        <dbReference type="Rhea" id="RHEA:41860"/>
        <dbReference type="Rhea" id="RHEA-COMP:9638"/>
        <dbReference type="Rhea" id="RHEA-COMP:9639"/>
        <dbReference type="ChEBI" id="CHEBI:15377"/>
        <dbReference type="ChEBI" id="CHEBI:78466"/>
        <dbReference type="ChEBI" id="CHEBI:78467"/>
    </reaction>
</comment>
<comment type="catalytic activity">
    <reaction evidence="1">
        <text>(2E)-decenoyl-[ACP] = (3Z)-decenoyl-[ACP]</text>
        <dbReference type="Rhea" id="RHEA:23568"/>
        <dbReference type="Rhea" id="RHEA-COMP:9639"/>
        <dbReference type="Rhea" id="RHEA-COMP:9927"/>
        <dbReference type="ChEBI" id="CHEBI:78467"/>
        <dbReference type="ChEBI" id="CHEBI:78798"/>
        <dbReference type="EC" id="5.3.3.14"/>
    </reaction>
</comment>
<comment type="pathway">
    <text evidence="1">Lipid metabolism; fatty acid biosynthesis.</text>
</comment>
<comment type="subunit">
    <text evidence="1">Homodimer.</text>
</comment>
<comment type="subcellular location">
    <subcellularLocation>
        <location evidence="1">Cytoplasm</location>
    </subcellularLocation>
</comment>
<comment type="similarity">
    <text evidence="1">Belongs to the thioester dehydratase family. FabA subfamily.</text>
</comment>